<organism>
    <name type="scientific">Escherichia coli O6:K15:H31 (strain 536 / UPEC)</name>
    <dbReference type="NCBI Taxonomy" id="362663"/>
    <lineage>
        <taxon>Bacteria</taxon>
        <taxon>Pseudomonadati</taxon>
        <taxon>Pseudomonadota</taxon>
        <taxon>Gammaproteobacteria</taxon>
        <taxon>Enterobacterales</taxon>
        <taxon>Enterobacteriaceae</taxon>
        <taxon>Escherichia</taxon>
    </lineage>
</organism>
<proteinExistence type="inferred from homology"/>
<dbReference type="EC" id="1.1.5.3" evidence="1"/>
<dbReference type="EMBL" id="CP000247">
    <property type="protein sequence ID" value="ABG70278.1"/>
    <property type="status" value="ALT_SEQ"/>
    <property type="molecule type" value="Genomic_DNA"/>
</dbReference>
<dbReference type="KEGG" id="ecp:ECP_2284"/>
<dbReference type="HOGENOM" id="CLU_047793_0_0_6"/>
<dbReference type="UniPathway" id="UPA00618">
    <property type="reaction ID" value="UER00673"/>
</dbReference>
<dbReference type="Proteomes" id="UP000009182">
    <property type="component" value="Chromosome"/>
</dbReference>
<dbReference type="GO" id="GO:0009331">
    <property type="term" value="C:glycerol-3-phosphate dehydrogenase (FAD) complex"/>
    <property type="evidence" value="ECO:0007669"/>
    <property type="project" value="InterPro"/>
</dbReference>
<dbReference type="GO" id="GO:0004368">
    <property type="term" value="F:glycerol-3-phosphate dehydrogenase (quinone) activity"/>
    <property type="evidence" value="ECO:0007669"/>
    <property type="project" value="UniProtKB-UniRule"/>
</dbReference>
<dbReference type="GO" id="GO:0009061">
    <property type="term" value="P:anaerobic respiration"/>
    <property type="evidence" value="ECO:0007669"/>
    <property type="project" value="TreeGrafter"/>
</dbReference>
<dbReference type="GO" id="GO:0019563">
    <property type="term" value="P:glycerol catabolic process"/>
    <property type="evidence" value="ECO:0007669"/>
    <property type="project" value="UniProtKB-UniRule"/>
</dbReference>
<dbReference type="GO" id="GO:0046168">
    <property type="term" value="P:glycerol-3-phosphate catabolic process"/>
    <property type="evidence" value="ECO:0007669"/>
    <property type="project" value="TreeGrafter"/>
</dbReference>
<dbReference type="Gene3D" id="3.50.50.60">
    <property type="entry name" value="FAD/NAD(P)-binding domain"/>
    <property type="match status" value="1"/>
</dbReference>
<dbReference type="HAMAP" id="MF_00753">
    <property type="entry name" value="Glycerol3P_GlpB"/>
    <property type="match status" value="1"/>
</dbReference>
<dbReference type="InterPro" id="IPR003953">
    <property type="entry name" value="FAD-dep_OxRdtase_2_FAD-bd"/>
</dbReference>
<dbReference type="InterPro" id="IPR050315">
    <property type="entry name" value="FAD-oxidoreductase_2"/>
</dbReference>
<dbReference type="InterPro" id="IPR036188">
    <property type="entry name" value="FAD/NAD-bd_sf"/>
</dbReference>
<dbReference type="InterPro" id="IPR009158">
    <property type="entry name" value="G3P_DH_GlpB_su"/>
</dbReference>
<dbReference type="NCBIfam" id="TIGR03378">
    <property type="entry name" value="glycerol3P_GlpB"/>
    <property type="match status" value="1"/>
</dbReference>
<dbReference type="NCBIfam" id="NF003718">
    <property type="entry name" value="PRK05329.1-1"/>
    <property type="match status" value="1"/>
</dbReference>
<dbReference type="NCBIfam" id="NF003719">
    <property type="entry name" value="PRK05329.1-2"/>
    <property type="match status" value="1"/>
</dbReference>
<dbReference type="NCBIfam" id="NF003720">
    <property type="entry name" value="PRK05329.1-3"/>
    <property type="match status" value="1"/>
</dbReference>
<dbReference type="NCBIfam" id="NF003721">
    <property type="entry name" value="PRK05329.1-4"/>
    <property type="match status" value="1"/>
</dbReference>
<dbReference type="PANTHER" id="PTHR43400:SF11">
    <property type="entry name" value="ANAEROBIC GLYCEROL-3-PHOSPHATE DEHYDROGENASE SUBUNIT B"/>
    <property type="match status" value="1"/>
</dbReference>
<dbReference type="PANTHER" id="PTHR43400">
    <property type="entry name" value="FUMARATE REDUCTASE"/>
    <property type="match status" value="1"/>
</dbReference>
<dbReference type="Pfam" id="PF00890">
    <property type="entry name" value="FAD_binding_2"/>
    <property type="match status" value="1"/>
</dbReference>
<dbReference type="PIRSF" id="PIRSF000141">
    <property type="entry name" value="Anaerobic_G3P_dh"/>
    <property type="match status" value="1"/>
</dbReference>
<dbReference type="SUPFAM" id="SSF51905">
    <property type="entry name" value="FAD/NAD(P)-binding domain"/>
    <property type="match status" value="1"/>
</dbReference>
<name>GLPB_ECOL5</name>
<feature type="chain" id="PRO_0000258901" description="Anaerobic glycerol-3-phosphate dehydrogenase subunit B">
    <location>
        <begin position="1"/>
        <end position="419"/>
    </location>
</feature>
<gene>
    <name evidence="1" type="primary">glpB</name>
    <name type="ordered locus">ECP_2284</name>
</gene>
<reference key="1">
    <citation type="journal article" date="2006" name="Mol. Microbiol.">
        <title>Role of pathogenicity island-associated integrases in the genome plasticity of uropathogenic Escherichia coli strain 536.</title>
        <authorList>
            <person name="Hochhut B."/>
            <person name="Wilde C."/>
            <person name="Balling G."/>
            <person name="Middendorf B."/>
            <person name="Dobrindt U."/>
            <person name="Brzuszkiewicz E."/>
            <person name="Gottschalk G."/>
            <person name="Carniel E."/>
            <person name="Hacker J."/>
        </authorList>
    </citation>
    <scope>NUCLEOTIDE SEQUENCE [LARGE SCALE GENOMIC DNA]</scope>
    <source>
        <strain>536 / UPEC</strain>
    </source>
</reference>
<sequence length="419" mass="45393">MRFDTVIMGGGLAGLLCGLQLQKHGLRCAIVTRGQSALHFSSGSLDLLSHLPDGQPVTEIHSGLESLRQQAPAHPYTLLGPQRVLDLACQAQALIAESGAQLQGSVELAHQRITPLGTLRSTWLSSPEVPVWPLPAKKICVVGISGLMDFQAHLAAASLRELDLKVETAEIELPELDVLRNNATEFRAVNIARFLDNEENWPLLLDALIPVANTCEMILMPACFGLANDKLWHWLNEKLPCSLMLLPTLPPSVLGIRLQNQLQRQFVRQGGVWMPGDEVKKVTCKNGVVNEIWTRNHADIPLRPRFAVLASGSFFSGGLVAERDGIREPILGLDVLQTATRGEWYKGDFFAPQPWQQFGVTTDEALRPSQAGQTIENLFAIGSVLGGFDPIAQGCGGGVCAVSALHAAQQIAQRAGGQQ</sequence>
<keyword id="KW-0285">Flavoprotein</keyword>
<keyword id="KW-0288">FMN</keyword>
<keyword id="KW-0560">Oxidoreductase</keyword>
<protein>
    <recommendedName>
        <fullName evidence="1">Anaerobic glycerol-3-phosphate dehydrogenase subunit B</fullName>
        <shortName evidence="1">Anaerobic G-3-P dehydrogenase subunit B</shortName>
        <shortName evidence="1">Anaerobic G3Pdhase B</shortName>
        <ecNumber evidence="1">1.1.5.3</ecNumber>
    </recommendedName>
</protein>
<comment type="function">
    <text evidence="1">Conversion of glycerol 3-phosphate to dihydroxyacetone. Uses fumarate or nitrate as electron acceptor.</text>
</comment>
<comment type="catalytic activity">
    <reaction evidence="1">
        <text>a quinone + sn-glycerol 3-phosphate = dihydroxyacetone phosphate + a quinol</text>
        <dbReference type="Rhea" id="RHEA:18977"/>
        <dbReference type="ChEBI" id="CHEBI:24646"/>
        <dbReference type="ChEBI" id="CHEBI:57597"/>
        <dbReference type="ChEBI" id="CHEBI:57642"/>
        <dbReference type="ChEBI" id="CHEBI:132124"/>
        <dbReference type="EC" id="1.1.5.3"/>
    </reaction>
</comment>
<comment type="cofactor">
    <cofactor evidence="1">
        <name>FMN</name>
        <dbReference type="ChEBI" id="CHEBI:58210"/>
    </cofactor>
</comment>
<comment type="pathway">
    <text evidence="1">Polyol metabolism; glycerol degradation via glycerol kinase pathway; glycerone phosphate from sn-glycerol 3-phosphate (anaerobic route): step 1/1.</text>
</comment>
<comment type="subunit">
    <text evidence="1">Composed of a catalytic GlpA/B dimer and of membrane bound GlpC.</text>
</comment>
<comment type="similarity">
    <text evidence="1">Belongs to the anaerobic G-3-P dehydrogenase subunit B family.</text>
</comment>
<comment type="sequence caution" evidence="2">
    <conflict type="erroneous termination">
        <sequence resource="EMBL-CDS" id="ABG70278"/>
    </conflict>
    <text>Truncated C-terminus.</text>
</comment>
<evidence type="ECO:0000255" key="1">
    <source>
        <dbReference type="HAMAP-Rule" id="MF_00753"/>
    </source>
</evidence>
<evidence type="ECO:0000305" key="2"/>
<accession>Q0TFK1</accession>